<sequence>MVRKNQEWPDEGELIIGTVYKVLNYGAFAKLEEYHGKEAFIHISEVSSGWVKNIRDHVRENQKIVCRVLRVNPKKGHVDASLKRIREDQRTKKIQHWKIEQKAEKFLELSAKSLGKSLNDAYDEVGYELMDIFGDVYGAFETAADDGAKSLTDEGISQEWADAITEIANKNITPPEVHISGYVDIETFVPDGVDVIIEALKAAEDNGDEEEEIKVQCVGAPRYRITVKSTDYILAEKALKAAADRCIEIVEASEGNGSFLRELDS</sequence>
<name>IF2A_METS3</name>
<organism>
    <name type="scientific">Methanobrevibacter smithii (strain ATCC 35061 / DSM 861 / OCM 144 / PS)</name>
    <dbReference type="NCBI Taxonomy" id="420247"/>
    <lineage>
        <taxon>Archaea</taxon>
        <taxon>Methanobacteriati</taxon>
        <taxon>Methanobacteriota</taxon>
        <taxon>Methanomada group</taxon>
        <taxon>Methanobacteria</taxon>
        <taxon>Methanobacteriales</taxon>
        <taxon>Methanobacteriaceae</taxon>
        <taxon>Methanobrevibacter</taxon>
    </lineage>
</organism>
<comment type="function">
    <text evidence="1">eIF-2 functions in the early steps of protein synthesis by forming a ternary complex with GTP and initiator tRNA.</text>
</comment>
<comment type="subunit">
    <text evidence="1">Heterotrimer composed of an alpha, a beta and a gamma chain.</text>
</comment>
<comment type="similarity">
    <text evidence="1">Belongs to the eIF-2-alpha family.</text>
</comment>
<dbReference type="EMBL" id="CP000678">
    <property type="protein sequence ID" value="ABQ87338.1"/>
    <property type="molecule type" value="Genomic_DNA"/>
</dbReference>
<dbReference type="RefSeq" id="WP_004032805.1">
    <property type="nucleotide sequence ID" value="NZ_CP117965.1"/>
</dbReference>
<dbReference type="SMR" id="A5UMB0"/>
<dbReference type="STRING" id="420247.Msm_1133"/>
<dbReference type="EnsemblBacteria" id="ABQ87338">
    <property type="protein sequence ID" value="ABQ87338"/>
    <property type="gene ID" value="Msm_1133"/>
</dbReference>
<dbReference type="KEGG" id="msi:Msm_1133"/>
<dbReference type="PATRIC" id="fig|420247.28.peg.1132"/>
<dbReference type="eggNOG" id="arCOG04107">
    <property type="taxonomic scope" value="Archaea"/>
</dbReference>
<dbReference type="HOGENOM" id="CLU_033458_0_2_2"/>
<dbReference type="Proteomes" id="UP000001992">
    <property type="component" value="Chromosome"/>
</dbReference>
<dbReference type="GO" id="GO:0043022">
    <property type="term" value="F:ribosome binding"/>
    <property type="evidence" value="ECO:0007669"/>
    <property type="project" value="TreeGrafter"/>
</dbReference>
<dbReference type="GO" id="GO:0003723">
    <property type="term" value="F:RNA binding"/>
    <property type="evidence" value="ECO:0007669"/>
    <property type="project" value="UniProtKB-UniRule"/>
</dbReference>
<dbReference type="GO" id="GO:0003743">
    <property type="term" value="F:translation initiation factor activity"/>
    <property type="evidence" value="ECO:0007669"/>
    <property type="project" value="UniProtKB-UniRule"/>
</dbReference>
<dbReference type="CDD" id="cd04452">
    <property type="entry name" value="S1_IF2_alpha"/>
    <property type="match status" value="1"/>
</dbReference>
<dbReference type="FunFam" id="2.40.50.140:FF:000015">
    <property type="entry name" value="Eukaryotic translation initiation factor 2 subunit alpha"/>
    <property type="match status" value="1"/>
</dbReference>
<dbReference type="FunFam" id="3.30.70.1130:FF:000002">
    <property type="entry name" value="Translation initiation factor 2 subunit alpha"/>
    <property type="match status" value="1"/>
</dbReference>
<dbReference type="Gene3D" id="3.30.70.1130">
    <property type="entry name" value="EIF_2_alpha"/>
    <property type="match status" value="1"/>
</dbReference>
<dbReference type="Gene3D" id="2.40.50.140">
    <property type="entry name" value="Nucleic acid-binding proteins"/>
    <property type="match status" value="1"/>
</dbReference>
<dbReference type="Gene3D" id="1.10.150.190">
    <property type="entry name" value="Translation initiation factor 2, subunit 1, domain 2"/>
    <property type="match status" value="1"/>
</dbReference>
<dbReference type="HAMAP" id="MF_00231">
    <property type="entry name" value="eIF_2_alpha"/>
    <property type="match status" value="1"/>
</dbReference>
<dbReference type="InterPro" id="IPR012340">
    <property type="entry name" value="NA-bd_OB-fold"/>
</dbReference>
<dbReference type="InterPro" id="IPR003029">
    <property type="entry name" value="S1_domain"/>
</dbReference>
<dbReference type="InterPro" id="IPR044126">
    <property type="entry name" value="S1_IF2_alpha"/>
</dbReference>
<dbReference type="InterPro" id="IPR022964">
    <property type="entry name" value="TIF2_asu_arc"/>
</dbReference>
<dbReference type="InterPro" id="IPR024055">
    <property type="entry name" value="TIF2_asu_C"/>
</dbReference>
<dbReference type="InterPro" id="IPR024054">
    <property type="entry name" value="TIF2_asu_middle_sf"/>
</dbReference>
<dbReference type="InterPro" id="IPR011488">
    <property type="entry name" value="TIF_2_asu"/>
</dbReference>
<dbReference type="NCBIfam" id="NF003062">
    <property type="entry name" value="PRK03987.1-1"/>
    <property type="match status" value="1"/>
</dbReference>
<dbReference type="NCBIfam" id="NF003064">
    <property type="entry name" value="PRK03987.1-4"/>
    <property type="match status" value="1"/>
</dbReference>
<dbReference type="PANTHER" id="PTHR10602">
    <property type="entry name" value="EUKARYOTIC TRANSLATION INITIATION FACTOR 2 SUBUNIT 1"/>
    <property type="match status" value="1"/>
</dbReference>
<dbReference type="PANTHER" id="PTHR10602:SF0">
    <property type="entry name" value="EUKARYOTIC TRANSLATION INITIATION FACTOR 2 SUBUNIT 1"/>
    <property type="match status" value="1"/>
</dbReference>
<dbReference type="Pfam" id="PF07541">
    <property type="entry name" value="EIF_2_alpha"/>
    <property type="match status" value="1"/>
</dbReference>
<dbReference type="Pfam" id="PF00575">
    <property type="entry name" value="S1"/>
    <property type="match status" value="1"/>
</dbReference>
<dbReference type="SMART" id="SM00316">
    <property type="entry name" value="S1"/>
    <property type="match status" value="1"/>
</dbReference>
<dbReference type="SUPFAM" id="SSF110993">
    <property type="entry name" value="eIF-2-alpha, C-terminal domain"/>
    <property type="match status" value="1"/>
</dbReference>
<dbReference type="SUPFAM" id="SSF116742">
    <property type="entry name" value="eIF2alpha middle domain-like"/>
    <property type="match status" value="1"/>
</dbReference>
<dbReference type="SUPFAM" id="SSF50249">
    <property type="entry name" value="Nucleic acid-binding proteins"/>
    <property type="match status" value="1"/>
</dbReference>
<dbReference type="PROSITE" id="PS50126">
    <property type="entry name" value="S1"/>
    <property type="match status" value="1"/>
</dbReference>
<protein>
    <recommendedName>
        <fullName evidence="1">Translation initiation factor 2 subunit alpha</fullName>
    </recommendedName>
    <alternativeName>
        <fullName evidence="1">aIF2-alpha</fullName>
    </alternativeName>
    <alternativeName>
        <fullName evidence="1">eIF-2-alpha</fullName>
    </alternativeName>
</protein>
<keyword id="KW-0396">Initiation factor</keyword>
<keyword id="KW-0648">Protein biosynthesis</keyword>
<keyword id="KW-0694">RNA-binding</keyword>
<reference key="1">
    <citation type="journal article" date="2007" name="Proc. Natl. Acad. Sci. U.S.A.">
        <title>Genomic and metabolic adaptations of Methanobrevibacter smithii to the human gut.</title>
        <authorList>
            <person name="Samuel B.S."/>
            <person name="Hansen E.E."/>
            <person name="Manchester J.K."/>
            <person name="Coutinho P.M."/>
            <person name="Henrissat B."/>
            <person name="Fulton R."/>
            <person name="Latreille P."/>
            <person name="Kim K."/>
            <person name="Wilson R.K."/>
            <person name="Gordon J.I."/>
        </authorList>
    </citation>
    <scope>NUCLEOTIDE SEQUENCE [LARGE SCALE GENOMIC DNA]</scope>
    <source>
        <strain>ATCC 35061 / DSM 861 / OCM 144 / PS</strain>
    </source>
</reference>
<gene>
    <name evidence="1" type="primary">eif2a</name>
    <name type="ordered locus">Msm_1133</name>
</gene>
<evidence type="ECO:0000255" key="1">
    <source>
        <dbReference type="HAMAP-Rule" id="MF_00231"/>
    </source>
</evidence>
<feature type="chain" id="PRO_1000021645" description="Translation initiation factor 2 subunit alpha">
    <location>
        <begin position="1"/>
        <end position="265"/>
    </location>
</feature>
<feature type="domain" description="S1 motif" evidence="1">
    <location>
        <begin position="12"/>
        <end position="83"/>
    </location>
</feature>
<proteinExistence type="inferred from homology"/>
<accession>A5UMB0</accession>